<keyword id="KW-0687">Ribonucleoprotein</keyword>
<keyword id="KW-0689">Ribosomal protein</keyword>
<keyword id="KW-0694">RNA-binding</keyword>
<keyword id="KW-0699">rRNA-binding</keyword>
<comment type="function">
    <text evidence="1">One of the primary rRNA binding proteins, it binds directly to 16S rRNA where it nucleates assembly of the body of the 30S subunit.</text>
</comment>
<comment type="function">
    <text evidence="1">With S5 and S12 plays an important role in translational accuracy.</text>
</comment>
<comment type="subunit">
    <text evidence="1">Part of the 30S ribosomal subunit. Contacts protein S5. The interaction surface between S4 and S5 is involved in control of translational fidelity.</text>
</comment>
<comment type="similarity">
    <text evidence="1">Belongs to the universal ribosomal protein uS4 family.</text>
</comment>
<name>RS4_STRP6</name>
<sequence>MSRYTGPSWKQSRRLGLSLTGTGKELARRNYVPGQHGPNNRSKLSEYGLQLAEKQKLRFSYGLGEKQFRNLFVQATKIKEGTLGFNFMVLLERRLDNVVYRLGLATTRRQARQFVNHGHILVDGKRVDIPSYRVDPGQVISVREKSMKVPAILEAVEATLGRPAFVSFDAEKLEGSLTRLPERDEINPEINEALVVEFYNKML</sequence>
<reference key="1">
    <citation type="journal article" date="2004" name="J. Infect. Dis.">
        <title>Progress toward characterization of the group A Streptococcus metagenome: complete genome sequence of a macrolide-resistant serotype M6 strain.</title>
        <authorList>
            <person name="Banks D.J."/>
            <person name="Porcella S.F."/>
            <person name="Barbian K.D."/>
            <person name="Beres S.B."/>
            <person name="Philips L.E."/>
            <person name="Voyich J.M."/>
            <person name="DeLeo F.R."/>
            <person name="Martin J.M."/>
            <person name="Somerville G.A."/>
            <person name="Musser J.M."/>
        </authorList>
    </citation>
    <scope>NUCLEOTIDE SEQUENCE [LARGE SCALE GENOMIC DNA]</scope>
    <source>
        <strain>ATCC BAA-946 / MGAS10394</strain>
    </source>
</reference>
<organism>
    <name type="scientific">Streptococcus pyogenes serotype M6 (strain ATCC BAA-946 / MGAS10394)</name>
    <dbReference type="NCBI Taxonomy" id="286636"/>
    <lineage>
        <taxon>Bacteria</taxon>
        <taxon>Bacillati</taxon>
        <taxon>Bacillota</taxon>
        <taxon>Bacilli</taxon>
        <taxon>Lactobacillales</taxon>
        <taxon>Streptococcaceae</taxon>
        <taxon>Streptococcus</taxon>
    </lineage>
</organism>
<evidence type="ECO:0000255" key="1">
    <source>
        <dbReference type="HAMAP-Rule" id="MF_01306"/>
    </source>
</evidence>
<evidence type="ECO:0000305" key="2"/>
<gene>
    <name evidence="1" type="primary">rpsD</name>
    <name type="ordered locus">M6_Spy1851</name>
</gene>
<feature type="chain" id="PRO_0000132475" description="Small ribosomal subunit protein uS4">
    <location>
        <begin position="1"/>
        <end position="203"/>
    </location>
</feature>
<feature type="domain" description="S4 RNA-binding" evidence="1">
    <location>
        <begin position="93"/>
        <end position="156"/>
    </location>
</feature>
<proteinExistence type="inferred from homology"/>
<accession>Q5X9C7</accession>
<protein>
    <recommendedName>
        <fullName evidence="1">Small ribosomal subunit protein uS4</fullName>
    </recommendedName>
    <alternativeName>
        <fullName evidence="2">30S ribosomal protein S4</fullName>
    </alternativeName>
</protein>
<dbReference type="EMBL" id="CP000003">
    <property type="protein sequence ID" value="AAT87986.1"/>
    <property type="molecule type" value="Genomic_DNA"/>
</dbReference>
<dbReference type="RefSeq" id="WP_002982092.1">
    <property type="nucleotide sequence ID" value="NC_006086.1"/>
</dbReference>
<dbReference type="SMR" id="Q5X9C7"/>
<dbReference type="GeneID" id="69901600"/>
<dbReference type="KEGG" id="spa:M6_Spy1851"/>
<dbReference type="HOGENOM" id="CLU_092403_0_1_9"/>
<dbReference type="Proteomes" id="UP000001167">
    <property type="component" value="Chromosome"/>
</dbReference>
<dbReference type="GO" id="GO:0015935">
    <property type="term" value="C:small ribosomal subunit"/>
    <property type="evidence" value="ECO:0007669"/>
    <property type="project" value="InterPro"/>
</dbReference>
<dbReference type="GO" id="GO:0019843">
    <property type="term" value="F:rRNA binding"/>
    <property type="evidence" value="ECO:0007669"/>
    <property type="project" value="UniProtKB-UniRule"/>
</dbReference>
<dbReference type="GO" id="GO:0003735">
    <property type="term" value="F:structural constituent of ribosome"/>
    <property type="evidence" value="ECO:0007669"/>
    <property type="project" value="InterPro"/>
</dbReference>
<dbReference type="GO" id="GO:0042274">
    <property type="term" value="P:ribosomal small subunit biogenesis"/>
    <property type="evidence" value="ECO:0007669"/>
    <property type="project" value="TreeGrafter"/>
</dbReference>
<dbReference type="GO" id="GO:0006412">
    <property type="term" value="P:translation"/>
    <property type="evidence" value="ECO:0007669"/>
    <property type="project" value="UniProtKB-UniRule"/>
</dbReference>
<dbReference type="CDD" id="cd00165">
    <property type="entry name" value="S4"/>
    <property type="match status" value="1"/>
</dbReference>
<dbReference type="FunFam" id="1.10.1050.10:FF:000001">
    <property type="entry name" value="30S ribosomal protein S4"/>
    <property type="match status" value="1"/>
</dbReference>
<dbReference type="FunFam" id="3.10.290.10:FF:000001">
    <property type="entry name" value="30S ribosomal protein S4"/>
    <property type="match status" value="1"/>
</dbReference>
<dbReference type="Gene3D" id="1.10.1050.10">
    <property type="entry name" value="Ribosomal Protein S4 Delta 41, Chain A, domain 1"/>
    <property type="match status" value="1"/>
</dbReference>
<dbReference type="Gene3D" id="3.10.290.10">
    <property type="entry name" value="RNA-binding S4 domain"/>
    <property type="match status" value="1"/>
</dbReference>
<dbReference type="HAMAP" id="MF_01306_B">
    <property type="entry name" value="Ribosomal_uS4_B"/>
    <property type="match status" value="1"/>
</dbReference>
<dbReference type="InterPro" id="IPR022801">
    <property type="entry name" value="Ribosomal_uS4"/>
</dbReference>
<dbReference type="InterPro" id="IPR005709">
    <property type="entry name" value="Ribosomal_uS4_bac-type"/>
</dbReference>
<dbReference type="InterPro" id="IPR018079">
    <property type="entry name" value="Ribosomal_uS4_CS"/>
</dbReference>
<dbReference type="InterPro" id="IPR001912">
    <property type="entry name" value="Ribosomal_uS4_N"/>
</dbReference>
<dbReference type="InterPro" id="IPR002942">
    <property type="entry name" value="S4_RNA-bd"/>
</dbReference>
<dbReference type="InterPro" id="IPR036986">
    <property type="entry name" value="S4_RNA-bd_sf"/>
</dbReference>
<dbReference type="NCBIfam" id="NF003717">
    <property type="entry name" value="PRK05327.1"/>
    <property type="match status" value="1"/>
</dbReference>
<dbReference type="NCBIfam" id="TIGR01017">
    <property type="entry name" value="rpsD_bact"/>
    <property type="match status" value="1"/>
</dbReference>
<dbReference type="PANTHER" id="PTHR11831">
    <property type="entry name" value="30S 40S RIBOSOMAL PROTEIN"/>
    <property type="match status" value="1"/>
</dbReference>
<dbReference type="PANTHER" id="PTHR11831:SF4">
    <property type="entry name" value="SMALL RIBOSOMAL SUBUNIT PROTEIN US4M"/>
    <property type="match status" value="1"/>
</dbReference>
<dbReference type="Pfam" id="PF00163">
    <property type="entry name" value="Ribosomal_S4"/>
    <property type="match status" value="1"/>
</dbReference>
<dbReference type="Pfam" id="PF01479">
    <property type="entry name" value="S4"/>
    <property type="match status" value="1"/>
</dbReference>
<dbReference type="SMART" id="SM01390">
    <property type="entry name" value="Ribosomal_S4"/>
    <property type="match status" value="1"/>
</dbReference>
<dbReference type="SMART" id="SM00363">
    <property type="entry name" value="S4"/>
    <property type="match status" value="1"/>
</dbReference>
<dbReference type="SUPFAM" id="SSF55174">
    <property type="entry name" value="Alpha-L RNA-binding motif"/>
    <property type="match status" value="1"/>
</dbReference>
<dbReference type="PROSITE" id="PS00632">
    <property type="entry name" value="RIBOSOMAL_S4"/>
    <property type="match status" value="1"/>
</dbReference>
<dbReference type="PROSITE" id="PS50889">
    <property type="entry name" value="S4"/>
    <property type="match status" value="1"/>
</dbReference>